<protein>
    <recommendedName>
        <fullName>Protein PNS1</fullName>
    </recommendedName>
    <alternativeName>
        <fullName>pH nine-sensitive protein 1</fullName>
    </alternativeName>
</protein>
<sequence length="539" mass="60251">MPLNEKYERPPQPPPAYDPNHRPPSSSENSAAANVNDGQTPYHFRQDQYYNLNSKTSGAPIGSFDEAFPTENDNKPRWNDWPFTIFFLCTVGGFIAIAAITLRAWSQTYSSTGSGIYDGVNTGTLNTNAAILLVFVCIIALVFSVLGLTLCRIFPKQFIYCGMVINLVASLGTAIMYMSLRYWSAGIVFLVFTFMTAWCYWGMRSRIPLSVAVLKVVVDAMKKCPQIFFVSFVGALVASAFGFLFSAVIVATYIKYDPNSSNGGCDVSGGSCSHSKLIGVLVVVFFCGYYISEVIRNVIHCVISGVFGSWYYMSKSDQGMPRWPAFGALKRAMTYSFGSICFGSLLVALIDLLRQILQMIRHDVTSSGGGQIAIQILFMVFDWIIGFLKWLAEYFNHYAYSFIALYGKPYLRAAKETWYMLREKGMDALINDNLINIALGLFSMFASYMTALFTFLYLRFTSPQYNSNGAYNGALMAFSFVIALQICNIATEAIRSGTATFFVALGNDPEVFHHSYPHRFDEIFRAYPDVLRKLSHQNV</sequence>
<proteinExistence type="evidence at protein level"/>
<name>PNS1_YEAST</name>
<accession>Q12412</accession>
<accession>D6W2L8</accession>
<accession>Q6B2U3</accession>
<evidence type="ECO:0000250" key="1"/>
<evidence type="ECO:0000255" key="2"/>
<evidence type="ECO:0000256" key="3">
    <source>
        <dbReference type="SAM" id="MobiDB-lite"/>
    </source>
</evidence>
<evidence type="ECO:0000305" key="4"/>
<organism>
    <name type="scientific">Saccharomyces cerevisiae (strain ATCC 204508 / S288c)</name>
    <name type="common">Baker's yeast</name>
    <dbReference type="NCBI Taxonomy" id="559292"/>
    <lineage>
        <taxon>Eukaryota</taxon>
        <taxon>Fungi</taxon>
        <taxon>Dikarya</taxon>
        <taxon>Ascomycota</taxon>
        <taxon>Saccharomycotina</taxon>
        <taxon>Saccharomycetes</taxon>
        <taxon>Saccharomycetales</taxon>
        <taxon>Saccharomycetaceae</taxon>
        <taxon>Saccharomyces</taxon>
    </lineage>
</organism>
<feature type="chain" id="PRO_0000191740" description="Protein PNS1">
    <location>
        <begin position="1"/>
        <end position="539"/>
    </location>
</feature>
<feature type="topological domain" description="Cytoplasmic" evidence="2">
    <location>
        <begin position="1"/>
        <end position="81"/>
    </location>
</feature>
<feature type="transmembrane region" description="Helical" evidence="2">
    <location>
        <begin position="82"/>
        <end position="102"/>
    </location>
</feature>
<feature type="topological domain" description="Extracellular" evidence="2">
    <location>
        <begin position="103"/>
        <end position="129"/>
    </location>
</feature>
<feature type="transmembrane region" description="Helical" evidence="2">
    <location>
        <begin position="130"/>
        <end position="150"/>
    </location>
</feature>
<feature type="topological domain" description="Cytoplasmic" evidence="2">
    <location>
        <begin position="151"/>
        <end position="157"/>
    </location>
</feature>
<feature type="transmembrane region" description="Helical" evidence="2">
    <location>
        <begin position="158"/>
        <end position="178"/>
    </location>
</feature>
<feature type="topological domain" description="Extracellular" evidence="2">
    <location>
        <begin position="179"/>
        <end position="182"/>
    </location>
</feature>
<feature type="transmembrane region" description="Helical" evidence="2">
    <location>
        <begin position="183"/>
        <end position="203"/>
    </location>
</feature>
<feature type="topological domain" description="Cytoplasmic" evidence="2">
    <location>
        <begin position="204"/>
        <end position="226"/>
    </location>
</feature>
<feature type="transmembrane region" description="Helical" evidence="2">
    <location>
        <begin position="227"/>
        <end position="247"/>
    </location>
</feature>
<feature type="topological domain" description="Extracellular" evidence="2">
    <location>
        <begin position="248"/>
        <end position="274"/>
    </location>
</feature>
<feature type="transmembrane region" description="Helical" evidence="2">
    <location>
        <begin position="275"/>
        <end position="295"/>
    </location>
</feature>
<feature type="topological domain" description="Cytoplasmic" evidence="2">
    <location>
        <begin position="296"/>
        <end position="332"/>
    </location>
</feature>
<feature type="transmembrane region" description="Helical" evidence="2">
    <location>
        <begin position="333"/>
        <end position="353"/>
    </location>
</feature>
<feature type="topological domain" description="Extracellular" evidence="2">
    <location>
        <begin position="354"/>
        <end position="371"/>
    </location>
</feature>
<feature type="transmembrane region" description="Helical" evidence="2">
    <location>
        <begin position="372"/>
        <end position="392"/>
    </location>
</feature>
<feature type="topological domain" description="Cytoplasmic" evidence="2">
    <location>
        <begin position="393"/>
        <end position="436"/>
    </location>
</feature>
<feature type="transmembrane region" description="Helical" evidence="2">
    <location>
        <begin position="437"/>
        <end position="457"/>
    </location>
</feature>
<feature type="topological domain" description="Extracellular" evidence="2">
    <location>
        <begin position="458"/>
        <end position="473"/>
    </location>
</feature>
<feature type="transmembrane region" description="Helical" evidence="2">
    <location>
        <begin position="474"/>
        <end position="494"/>
    </location>
</feature>
<feature type="topological domain" description="Cytoplasmic" evidence="2">
    <location>
        <begin position="495"/>
        <end position="539"/>
    </location>
</feature>
<feature type="region of interest" description="Disordered" evidence="3">
    <location>
        <begin position="1"/>
        <end position="38"/>
    </location>
</feature>
<feature type="compositionally biased region" description="Low complexity" evidence="3">
    <location>
        <begin position="25"/>
        <end position="36"/>
    </location>
</feature>
<feature type="glycosylation site" description="N-linked (GlcNAc...) asparagine" evidence="2">
    <location>
        <position position="259"/>
    </location>
</feature>
<feature type="sequence conflict" description="In Ref. 4; AAT92656." evidence="4" ref="4">
    <original>R</original>
    <variation>K</variation>
    <location>
        <position position="181"/>
    </location>
</feature>
<keyword id="KW-0002">3D-structure</keyword>
<keyword id="KW-1003">Cell membrane</keyword>
<keyword id="KW-0325">Glycoprotein</keyword>
<keyword id="KW-0472">Membrane</keyword>
<keyword id="KW-1185">Reference proteome</keyword>
<keyword id="KW-0812">Transmembrane</keyword>
<keyword id="KW-1133">Transmembrane helix</keyword>
<keyword id="KW-0813">Transport</keyword>
<gene>
    <name type="primary">PNS1</name>
    <name type="ordered locus">YOR161C</name>
    <name type="ORF">O3568</name>
</gene>
<comment type="function">
    <text evidence="1">Probably involved in transport through the plasma membrane.</text>
</comment>
<comment type="subcellular location">
    <subcellularLocation>
        <location evidence="1">Cell membrane</location>
        <topology evidence="1">Multi-pass membrane protein</topology>
    </subcellularLocation>
</comment>
<comment type="similarity">
    <text evidence="4">Belongs to the CTL (choline transporter-like) family.</text>
</comment>
<reference key="1">
    <citation type="journal article" date="1996" name="Yeast">
        <title>Analysis of a 22,956 bp region on the right arm of Saccharomyces cerevisiae chromosome XV.</title>
        <authorList>
            <person name="Madania A."/>
            <person name="Poch O."/>
            <person name="Tarassov I.A."/>
            <person name="Winsor B."/>
            <person name="Martin R.P."/>
        </authorList>
    </citation>
    <scope>NUCLEOTIDE SEQUENCE [GENOMIC DNA]</scope>
    <source>
        <strain>S288c / FY1678</strain>
    </source>
</reference>
<reference key="2">
    <citation type="journal article" date="1997" name="Nature">
        <title>The nucleotide sequence of Saccharomyces cerevisiae chromosome XV.</title>
        <authorList>
            <person name="Dujon B."/>
            <person name="Albermann K."/>
            <person name="Aldea M."/>
            <person name="Alexandraki D."/>
            <person name="Ansorge W."/>
            <person name="Arino J."/>
            <person name="Benes V."/>
            <person name="Bohn C."/>
            <person name="Bolotin-Fukuhara M."/>
            <person name="Bordonne R."/>
            <person name="Boyer J."/>
            <person name="Camasses A."/>
            <person name="Casamayor A."/>
            <person name="Casas C."/>
            <person name="Cheret G."/>
            <person name="Cziepluch C."/>
            <person name="Daignan-Fornier B."/>
            <person name="Dang V.-D."/>
            <person name="de Haan M."/>
            <person name="Delius H."/>
            <person name="Durand P."/>
            <person name="Fairhead C."/>
            <person name="Feldmann H."/>
            <person name="Gaillon L."/>
            <person name="Galisson F."/>
            <person name="Gamo F.-J."/>
            <person name="Gancedo C."/>
            <person name="Goffeau A."/>
            <person name="Goulding S.E."/>
            <person name="Grivell L.A."/>
            <person name="Habbig B."/>
            <person name="Hand N.J."/>
            <person name="Hani J."/>
            <person name="Hattenhorst U."/>
            <person name="Hebling U."/>
            <person name="Hernando Y."/>
            <person name="Herrero E."/>
            <person name="Heumann K."/>
            <person name="Hiesel R."/>
            <person name="Hilger F."/>
            <person name="Hofmann B."/>
            <person name="Hollenberg C.P."/>
            <person name="Hughes B."/>
            <person name="Jauniaux J.-C."/>
            <person name="Kalogeropoulos A."/>
            <person name="Katsoulou C."/>
            <person name="Kordes E."/>
            <person name="Lafuente M.J."/>
            <person name="Landt O."/>
            <person name="Louis E.J."/>
            <person name="Maarse A.C."/>
            <person name="Madania A."/>
            <person name="Mannhaupt G."/>
            <person name="Marck C."/>
            <person name="Martin R.P."/>
            <person name="Mewes H.-W."/>
            <person name="Michaux G."/>
            <person name="Paces V."/>
            <person name="Parle-McDermott A.G."/>
            <person name="Pearson B.M."/>
            <person name="Perrin A."/>
            <person name="Pettersson B."/>
            <person name="Poch O."/>
            <person name="Pohl T.M."/>
            <person name="Poirey R."/>
            <person name="Portetelle D."/>
            <person name="Pujol A."/>
            <person name="Purnelle B."/>
            <person name="Ramezani Rad M."/>
            <person name="Rechmann S."/>
            <person name="Schwager C."/>
            <person name="Schweizer M."/>
            <person name="Sor F."/>
            <person name="Sterky F."/>
            <person name="Tarassov I.A."/>
            <person name="Teodoru C."/>
            <person name="Tettelin H."/>
            <person name="Thierry A."/>
            <person name="Tobiasch E."/>
            <person name="Tzermia M."/>
            <person name="Uhlen M."/>
            <person name="Unseld M."/>
            <person name="Valens M."/>
            <person name="Vandenbol M."/>
            <person name="Vetter I."/>
            <person name="Vlcek C."/>
            <person name="Voet M."/>
            <person name="Volckaert G."/>
            <person name="Voss H."/>
            <person name="Wambutt R."/>
            <person name="Wedler H."/>
            <person name="Wiemann S."/>
            <person name="Winsor B."/>
            <person name="Wolfe K.H."/>
            <person name="Zollner A."/>
            <person name="Zumstein E."/>
            <person name="Kleine K."/>
        </authorList>
    </citation>
    <scope>NUCLEOTIDE SEQUENCE [LARGE SCALE GENOMIC DNA]</scope>
    <source>
        <strain>ATCC 204508 / S288c</strain>
    </source>
</reference>
<reference key="3">
    <citation type="journal article" date="2014" name="G3 (Bethesda)">
        <title>The reference genome sequence of Saccharomyces cerevisiae: Then and now.</title>
        <authorList>
            <person name="Engel S.R."/>
            <person name="Dietrich F.S."/>
            <person name="Fisk D.G."/>
            <person name="Binkley G."/>
            <person name="Balakrishnan R."/>
            <person name="Costanzo M.C."/>
            <person name="Dwight S.S."/>
            <person name="Hitz B.C."/>
            <person name="Karra K."/>
            <person name="Nash R.S."/>
            <person name="Weng S."/>
            <person name="Wong E.D."/>
            <person name="Lloyd P."/>
            <person name="Skrzypek M.S."/>
            <person name="Miyasato S.R."/>
            <person name="Simison M."/>
            <person name="Cherry J.M."/>
        </authorList>
    </citation>
    <scope>GENOME REANNOTATION</scope>
    <source>
        <strain>ATCC 204508 / S288c</strain>
    </source>
</reference>
<reference key="4">
    <citation type="journal article" date="2007" name="Genome Res.">
        <title>Approaching a complete repository of sequence-verified protein-encoding clones for Saccharomyces cerevisiae.</title>
        <authorList>
            <person name="Hu Y."/>
            <person name="Rolfs A."/>
            <person name="Bhullar B."/>
            <person name="Murthy T.V.S."/>
            <person name="Zhu C."/>
            <person name="Berger M.F."/>
            <person name="Camargo A.A."/>
            <person name="Kelley F."/>
            <person name="McCarron S."/>
            <person name="Jepson D."/>
            <person name="Richardson A."/>
            <person name="Raphael J."/>
            <person name="Moreira D."/>
            <person name="Taycher E."/>
            <person name="Zuo D."/>
            <person name="Mohr S."/>
            <person name="Kane M.F."/>
            <person name="Williamson J."/>
            <person name="Simpson A.J.G."/>
            <person name="Bulyk M.L."/>
            <person name="Harlow E."/>
            <person name="Marsischky G."/>
            <person name="Kolodner R.D."/>
            <person name="LaBaer J."/>
        </authorList>
    </citation>
    <scope>NUCLEOTIDE SEQUENCE [GENOMIC DNA]</scope>
    <source>
        <strain>ATCC 204508 / S288c</strain>
    </source>
</reference>
<reference key="5">
    <citation type="journal article" date="2003" name="Nature">
        <title>Global analysis of protein localization in budding yeast.</title>
        <authorList>
            <person name="Huh W.-K."/>
            <person name="Falvo J.V."/>
            <person name="Gerke L.C."/>
            <person name="Carroll A.S."/>
            <person name="Howson R.W."/>
            <person name="Weissman J.S."/>
            <person name="O'Shea E.K."/>
        </authorList>
    </citation>
    <scope>SUBCELLULAR LOCATION [LARGE SCALE ANALYSIS]</scope>
</reference>
<reference key="6">
    <citation type="journal article" date="2004" name="Neurochem. Res.">
        <title>Reexamining the role of choline transporter-like (Ctlp) proteins in choline transport.</title>
        <authorList>
            <person name="Zufferey R."/>
            <person name="Santiago T.C."/>
            <person name="Brachet V."/>
            <person name="Ben-Mamoun C."/>
        </authorList>
    </citation>
    <scope>GENE NAME</scope>
    <scope>LACK OF FUNCTION IN TRANSPORT OF CHOLINE</scope>
</reference>
<reference key="7">
    <citation type="journal article" date="2009" name="Science">
        <title>Global analysis of Cdk1 substrate phosphorylation sites provides insights into evolution.</title>
        <authorList>
            <person name="Holt L.J."/>
            <person name="Tuch B.B."/>
            <person name="Villen J."/>
            <person name="Johnson A.D."/>
            <person name="Gygi S.P."/>
            <person name="Morgan D.O."/>
        </authorList>
    </citation>
    <scope>IDENTIFICATION BY MASS SPECTROMETRY [LARGE SCALE ANALYSIS]</scope>
</reference>
<dbReference type="EMBL" id="Z75069">
    <property type="protein sequence ID" value="CAA99367.1"/>
    <property type="molecule type" value="Genomic_DNA"/>
</dbReference>
<dbReference type="EMBL" id="U55021">
    <property type="protein sequence ID" value="AAB47408.1"/>
    <property type="molecule type" value="Genomic_DNA"/>
</dbReference>
<dbReference type="EMBL" id="AY692637">
    <property type="protein sequence ID" value="AAT92656.1"/>
    <property type="molecule type" value="Genomic_DNA"/>
</dbReference>
<dbReference type="EMBL" id="BK006948">
    <property type="protein sequence ID" value="DAA10934.1"/>
    <property type="molecule type" value="Genomic_DNA"/>
</dbReference>
<dbReference type="PIR" id="S67049">
    <property type="entry name" value="S67049"/>
</dbReference>
<dbReference type="RefSeq" id="NP_014804.3">
    <property type="nucleotide sequence ID" value="NM_001183580.3"/>
</dbReference>
<dbReference type="PDB" id="9F63">
    <property type="method" value="X-ray"/>
    <property type="resolution" value="2.73 A"/>
    <property type="chains" value="A=1-539"/>
</dbReference>
<dbReference type="PDBsum" id="9F63"/>
<dbReference type="SMR" id="Q12412"/>
<dbReference type="BioGRID" id="34557">
    <property type="interactions" value="43"/>
</dbReference>
<dbReference type="DIP" id="DIP-1858N"/>
<dbReference type="FunCoup" id="Q12412">
    <property type="interactions" value="334"/>
</dbReference>
<dbReference type="IntAct" id="Q12412">
    <property type="interactions" value="5"/>
</dbReference>
<dbReference type="MINT" id="Q12412"/>
<dbReference type="STRING" id="4932.YOR161C"/>
<dbReference type="TCDB" id="2.A.92.1.8">
    <property type="family name" value="the choline transporter-like (ctl) family"/>
</dbReference>
<dbReference type="GlyCosmos" id="Q12412">
    <property type="glycosylation" value="1 site, No reported glycans"/>
</dbReference>
<dbReference type="GlyGen" id="Q12412">
    <property type="glycosylation" value="1 site"/>
</dbReference>
<dbReference type="iPTMnet" id="Q12412"/>
<dbReference type="PaxDb" id="4932-YOR161C"/>
<dbReference type="PeptideAtlas" id="Q12412"/>
<dbReference type="EnsemblFungi" id="YOR161C_mRNA">
    <property type="protein sequence ID" value="YOR161C"/>
    <property type="gene ID" value="YOR161C"/>
</dbReference>
<dbReference type="GeneID" id="854332"/>
<dbReference type="KEGG" id="sce:YOR161C"/>
<dbReference type="AGR" id="SGD:S000005687"/>
<dbReference type="SGD" id="S000005687">
    <property type="gene designation" value="PNS1"/>
</dbReference>
<dbReference type="VEuPathDB" id="FungiDB:YOR161C"/>
<dbReference type="eggNOG" id="KOG1362">
    <property type="taxonomic scope" value="Eukaryota"/>
</dbReference>
<dbReference type="HOGENOM" id="CLU_026724_0_0_1"/>
<dbReference type="InParanoid" id="Q12412"/>
<dbReference type="OMA" id="DTIFVAM"/>
<dbReference type="OrthoDB" id="44736at2759"/>
<dbReference type="BioCyc" id="YEAST:G3O-33678-MONOMER"/>
<dbReference type="BioGRID-ORCS" id="854332">
    <property type="hits" value="4 hits in 10 CRISPR screens"/>
</dbReference>
<dbReference type="PRO" id="PR:Q12412"/>
<dbReference type="Proteomes" id="UP000002311">
    <property type="component" value="Chromosome XV"/>
</dbReference>
<dbReference type="RNAct" id="Q12412">
    <property type="molecule type" value="protein"/>
</dbReference>
<dbReference type="GO" id="GO:0071944">
    <property type="term" value="C:cell periphery"/>
    <property type="evidence" value="ECO:0007005"/>
    <property type="project" value="SGD"/>
</dbReference>
<dbReference type="GO" id="GO:0016020">
    <property type="term" value="C:membrane"/>
    <property type="evidence" value="ECO:0000318"/>
    <property type="project" value="GO_Central"/>
</dbReference>
<dbReference type="GO" id="GO:0005886">
    <property type="term" value="C:plasma membrane"/>
    <property type="evidence" value="ECO:0007005"/>
    <property type="project" value="SGD"/>
</dbReference>
<dbReference type="GO" id="GO:0022857">
    <property type="term" value="F:transmembrane transporter activity"/>
    <property type="evidence" value="ECO:0000318"/>
    <property type="project" value="GO_Central"/>
</dbReference>
<dbReference type="GO" id="GO:0055085">
    <property type="term" value="P:transmembrane transport"/>
    <property type="evidence" value="ECO:0000318"/>
    <property type="project" value="GO_Central"/>
</dbReference>
<dbReference type="InterPro" id="IPR007603">
    <property type="entry name" value="Choline_transptr-like"/>
</dbReference>
<dbReference type="PANTHER" id="PTHR12385">
    <property type="entry name" value="CHOLINE TRANSPORTER-LIKE (SLC FAMILY 44)"/>
    <property type="match status" value="1"/>
</dbReference>
<dbReference type="PANTHER" id="PTHR12385:SF4">
    <property type="entry name" value="PROTEIN PNS1"/>
    <property type="match status" value="1"/>
</dbReference>
<dbReference type="Pfam" id="PF04515">
    <property type="entry name" value="Choline_transpo"/>
    <property type="match status" value="1"/>
</dbReference>